<comment type="function">
    <text evidence="1">Structure-specific nuclease with 5'-flap endonuclease and 5'-3' exonuclease activities involved in DNA replication and repair. During DNA replication, cleaves the 5'-overhanging flap structure that is generated by displacement synthesis when DNA polymerase encounters the 5'-end of a downstream Okazaki fragment. It enters the flap from the 5'-end and then tracks to cleave the flap base, leaving a nick for ligation. Also involved in the long patch base excision repair (LP-BER) pathway, by cleaving within the apurinic/apyrimidinic (AP) site-terminated flap. Acts as a genome stabilization factor that prevents flaps from equilibrating into structures that lead to duplications and deletions. Also possesses 5'-3' exonuclease activity on nicked or gapped double-stranded DNA, and exhibits RNase H activity. Also involved in replication and repair of rDNA and in repairing mitochondrial DNA.</text>
</comment>
<comment type="cofactor">
    <cofactor evidence="1">
        <name>Mg(2+)</name>
        <dbReference type="ChEBI" id="CHEBI:18420"/>
    </cofactor>
    <text evidence="1">Binds 2 magnesium ions per subunit. They probably participate in the reaction catalyzed by the enzyme. May bind an additional third magnesium ion after substrate binding.</text>
</comment>
<comment type="subunit">
    <text evidence="1">Interacts with PCNA. Three molecules of FEN1 bind to one PCNA trimer with each molecule binding to one PCNA monomer. PCNA stimulates the nuclease activity without altering cleavage specificity.</text>
</comment>
<comment type="subcellular location">
    <subcellularLocation>
        <location evidence="1">Nucleus</location>
        <location evidence="1">Nucleolus</location>
    </subcellularLocation>
    <subcellularLocation>
        <location evidence="1">Nucleus</location>
        <location evidence="1">Nucleoplasm</location>
    </subcellularLocation>
    <subcellularLocation>
        <location evidence="1">Mitochondrion</location>
    </subcellularLocation>
    <text evidence="1">Resides mostly in the nucleoli and relocalizes to the nucleoplasm upon DNA damage.</text>
</comment>
<comment type="PTM">
    <text evidence="1">Phosphorylated. Phosphorylation upon DNA damage induces relocalization to the nuclear plasma.</text>
</comment>
<comment type="similarity">
    <text evidence="1">Belongs to the XPG/RAD2 endonuclease family. FEN1 subfamily.</text>
</comment>
<proteinExistence type="inferred from homology"/>
<organism>
    <name type="scientific">Drosophila yakuba</name>
    <name type="common">Fruit fly</name>
    <dbReference type="NCBI Taxonomy" id="7245"/>
    <lineage>
        <taxon>Eukaryota</taxon>
        <taxon>Metazoa</taxon>
        <taxon>Ecdysozoa</taxon>
        <taxon>Arthropoda</taxon>
        <taxon>Hexapoda</taxon>
        <taxon>Insecta</taxon>
        <taxon>Pterygota</taxon>
        <taxon>Neoptera</taxon>
        <taxon>Endopterygota</taxon>
        <taxon>Diptera</taxon>
        <taxon>Brachycera</taxon>
        <taxon>Muscomorpha</taxon>
        <taxon>Ephydroidea</taxon>
        <taxon>Drosophilidae</taxon>
        <taxon>Drosophila</taxon>
        <taxon>Sophophora</taxon>
    </lineage>
</organism>
<keyword id="KW-0227">DNA damage</keyword>
<keyword id="KW-0234">DNA repair</keyword>
<keyword id="KW-0235">DNA replication</keyword>
<keyword id="KW-0255">Endonuclease</keyword>
<keyword id="KW-0269">Exonuclease</keyword>
<keyword id="KW-0378">Hydrolase</keyword>
<keyword id="KW-0460">Magnesium</keyword>
<keyword id="KW-0479">Metal-binding</keyword>
<keyword id="KW-0496">Mitochondrion</keyword>
<keyword id="KW-0540">Nuclease</keyword>
<keyword id="KW-0539">Nucleus</keyword>
<keyword id="KW-0597">Phosphoprotein</keyword>
<gene>
    <name evidence="1" type="primary">Fen1</name>
    <name type="ORF">GE14031</name>
</gene>
<sequence>MGILGLSKLIADLAPQAIRESEIKNFFGRKVAIDASMCLYQFLIAVRSEGAQLATVNGDPTSHLMGMFYRTIRLLDNGIKPVYVFDGKPPDLKSGELAKRAERREEAEKALKAATDAGDDAGIEKFNRRLVRVTKEHANEAKELLTLMGVPYVDAPCEAEAQCAALVKAGKVYATATEDMDALTFGSTKLLRYLTYSEARKMPVKEFSYEKLLEGLSINSREFIDLCILLGCDYCESIKGIGPKRAIELINNYRDIETILDNLDSSKYTVPENWNYKVARELFIEPEVANADNIDLKWVEPDEEGLVKFLCGDRQFSEERVRNGAKKLMKSKQAQTQVRLDSFFKTLPSTPNATNAAKRKAEEAKKSANNKKAKTSGGGGGRGRRPK</sequence>
<name>FEN1_DROYA</name>
<evidence type="ECO:0000255" key="1">
    <source>
        <dbReference type="HAMAP-Rule" id="MF_03140"/>
    </source>
</evidence>
<evidence type="ECO:0000256" key="2">
    <source>
        <dbReference type="SAM" id="MobiDB-lite"/>
    </source>
</evidence>
<reference key="1">
    <citation type="journal article" date="2007" name="Nature">
        <title>Evolution of genes and genomes on the Drosophila phylogeny.</title>
        <authorList>
            <consortium name="Drosophila 12 genomes consortium"/>
        </authorList>
    </citation>
    <scope>NUCLEOTIDE SEQUENCE [LARGE SCALE GENOMIC DNA]</scope>
    <source>
        <strain>Tai18E2 / Tucson 14021-0261.01</strain>
    </source>
</reference>
<protein>
    <recommendedName>
        <fullName evidence="1">Flap endonuclease 1</fullName>
        <shortName evidence="1">FEN-1</shortName>
        <ecNumber evidence="1">3.1.-.-</ecNumber>
    </recommendedName>
    <alternativeName>
        <fullName evidence="1">Flap structure-specific endonuclease 1</fullName>
    </alternativeName>
</protein>
<dbReference type="EC" id="3.1.-.-" evidence="1"/>
<dbReference type="EMBL" id="CM000158">
    <property type="protein sequence ID" value="EDW91865.1"/>
    <property type="molecule type" value="Genomic_DNA"/>
</dbReference>
<dbReference type="SMR" id="B4P5U9"/>
<dbReference type="EnsemblMetazoa" id="FBtr0260549">
    <property type="protein sequence ID" value="FBpp0259041"/>
    <property type="gene ID" value="FBgn0231661"/>
</dbReference>
<dbReference type="EnsemblMetazoa" id="XM_002092117.3">
    <property type="protein sequence ID" value="XP_002092153.1"/>
    <property type="gene ID" value="LOC6531349"/>
</dbReference>
<dbReference type="GeneID" id="6531349"/>
<dbReference type="KEGG" id="dya:Dyak_GE14031"/>
<dbReference type="CTD" id="2237"/>
<dbReference type="eggNOG" id="KOG2519">
    <property type="taxonomic scope" value="Eukaryota"/>
</dbReference>
<dbReference type="HOGENOM" id="CLU_032444_2_0_1"/>
<dbReference type="OMA" id="MGIPWVQ"/>
<dbReference type="OrthoDB" id="1937206at2759"/>
<dbReference type="PhylomeDB" id="B4P5U9"/>
<dbReference type="Proteomes" id="UP000002282">
    <property type="component" value="Chromosome 2R"/>
</dbReference>
<dbReference type="GO" id="GO:0005739">
    <property type="term" value="C:mitochondrion"/>
    <property type="evidence" value="ECO:0007669"/>
    <property type="project" value="UniProtKB-SubCell"/>
</dbReference>
<dbReference type="GO" id="GO:0005730">
    <property type="term" value="C:nucleolus"/>
    <property type="evidence" value="ECO:0007669"/>
    <property type="project" value="UniProtKB-SubCell"/>
</dbReference>
<dbReference type="GO" id="GO:0005654">
    <property type="term" value="C:nucleoplasm"/>
    <property type="evidence" value="ECO:0007669"/>
    <property type="project" value="UniProtKB-SubCell"/>
</dbReference>
<dbReference type="GO" id="GO:0008409">
    <property type="term" value="F:5'-3' exonuclease activity"/>
    <property type="evidence" value="ECO:0007669"/>
    <property type="project" value="UniProtKB-UniRule"/>
</dbReference>
<dbReference type="GO" id="GO:0017108">
    <property type="term" value="F:5'-flap endonuclease activity"/>
    <property type="evidence" value="ECO:0007669"/>
    <property type="project" value="UniProtKB-UniRule"/>
</dbReference>
<dbReference type="GO" id="GO:0003677">
    <property type="term" value="F:DNA binding"/>
    <property type="evidence" value="ECO:0007669"/>
    <property type="project" value="UniProtKB-UniRule"/>
</dbReference>
<dbReference type="GO" id="GO:0000287">
    <property type="term" value="F:magnesium ion binding"/>
    <property type="evidence" value="ECO:0007669"/>
    <property type="project" value="UniProtKB-UniRule"/>
</dbReference>
<dbReference type="GO" id="GO:0030145">
    <property type="term" value="F:manganese ion binding"/>
    <property type="evidence" value="ECO:0007669"/>
    <property type="project" value="TreeGrafter"/>
</dbReference>
<dbReference type="GO" id="GO:0004523">
    <property type="term" value="F:RNA-DNA hybrid ribonuclease activity"/>
    <property type="evidence" value="ECO:0007669"/>
    <property type="project" value="TreeGrafter"/>
</dbReference>
<dbReference type="GO" id="GO:0006284">
    <property type="term" value="P:base-excision repair"/>
    <property type="evidence" value="ECO:0007669"/>
    <property type="project" value="UniProtKB-UniRule"/>
</dbReference>
<dbReference type="GO" id="GO:0043137">
    <property type="term" value="P:DNA replication, removal of RNA primer"/>
    <property type="evidence" value="ECO:0007669"/>
    <property type="project" value="UniProtKB-UniRule"/>
</dbReference>
<dbReference type="CDD" id="cd09867">
    <property type="entry name" value="PIN_FEN1"/>
    <property type="match status" value="1"/>
</dbReference>
<dbReference type="FunFam" id="1.10.150.20:FF:000009">
    <property type="entry name" value="Flap endonuclease 1"/>
    <property type="match status" value="1"/>
</dbReference>
<dbReference type="FunFam" id="3.40.50.1010:FF:000003">
    <property type="entry name" value="Flap endonuclease 1"/>
    <property type="match status" value="1"/>
</dbReference>
<dbReference type="Gene3D" id="1.10.150.20">
    <property type="entry name" value="5' to 3' exonuclease, C-terminal subdomain"/>
    <property type="match status" value="1"/>
</dbReference>
<dbReference type="Gene3D" id="3.40.50.1010">
    <property type="entry name" value="5'-nuclease"/>
    <property type="match status" value="1"/>
</dbReference>
<dbReference type="HAMAP" id="MF_00614">
    <property type="entry name" value="Fen"/>
    <property type="match status" value="1"/>
</dbReference>
<dbReference type="InterPro" id="IPR036279">
    <property type="entry name" value="5-3_exonuclease_C_sf"/>
</dbReference>
<dbReference type="InterPro" id="IPR023426">
    <property type="entry name" value="Flap_endonuc"/>
</dbReference>
<dbReference type="InterPro" id="IPR008918">
    <property type="entry name" value="HhH2"/>
</dbReference>
<dbReference type="InterPro" id="IPR029060">
    <property type="entry name" value="PIN-like_dom_sf"/>
</dbReference>
<dbReference type="InterPro" id="IPR006086">
    <property type="entry name" value="XPG-I_dom"/>
</dbReference>
<dbReference type="InterPro" id="IPR006084">
    <property type="entry name" value="XPG/Rad2"/>
</dbReference>
<dbReference type="InterPro" id="IPR019974">
    <property type="entry name" value="XPG_CS"/>
</dbReference>
<dbReference type="InterPro" id="IPR006085">
    <property type="entry name" value="XPG_DNA_repair_N"/>
</dbReference>
<dbReference type="PANTHER" id="PTHR11081:SF9">
    <property type="entry name" value="FLAP ENDONUCLEASE 1"/>
    <property type="match status" value="1"/>
</dbReference>
<dbReference type="PANTHER" id="PTHR11081">
    <property type="entry name" value="FLAP ENDONUCLEASE FAMILY MEMBER"/>
    <property type="match status" value="1"/>
</dbReference>
<dbReference type="Pfam" id="PF00867">
    <property type="entry name" value="XPG_I"/>
    <property type="match status" value="1"/>
</dbReference>
<dbReference type="Pfam" id="PF00752">
    <property type="entry name" value="XPG_N"/>
    <property type="match status" value="1"/>
</dbReference>
<dbReference type="PRINTS" id="PR00853">
    <property type="entry name" value="XPGRADSUPER"/>
</dbReference>
<dbReference type="SMART" id="SM00279">
    <property type="entry name" value="HhH2"/>
    <property type="match status" value="1"/>
</dbReference>
<dbReference type="SMART" id="SM00484">
    <property type="entry name" value="XPGI"/>
    <property type="match status" value="1"/>
</dbReference>
<dbReference type="SMART" id="SM00485">
    <property type="entry name" value="XPGN"/>
    <property type="match status" value="1"/>
</dbReference>
<dbReference type="SUPFAM" id="SSF47807">
    <property type="entry name" value="5' to 3' exonuclease, C-terminal subdomain"/>
    <property type="match status" value="1"/>
</dbReference>
<dbReference type="SUPFAM" id="SSF88723">
    <property type="entry name" value="PIN domain-like"/>
    <property type="match status" value="1"/>
</dbReference>
<dbReference type="PROSITE" id="PS00841">
    <property type="entry name" value="XPG_1"/>
    <property type="match status" value="1"/>
</dbReference>
<dbReference type="PROSITE" id="PS00842">
    <property type="entry name" value="XPG_2"/>
    <property type="match status" value="1"/>
</dbReference>
<accession>B4P5U9</accession>
<feature type="chain" id="PRO_0000403508" description="Flap endonuclease 1">
    <location>
        <begin position="1"/>
        <end position="387"/>
    </location>
</feature>
<feature type="region of interest" description="N-domain">
    <location>
        <begin position="1"/>
        <end position="104"/>
    </location>
</feature>
<feature type="region of interest" description="I-domain">
    <location>
        <begin position="122"/>
        <end position="253"/>
    </location>
</feature>
<feature type="region of interest" description="Interaction with PCNA" evidence="1">
    <location>
        <begin position="336"/>
        <end position="344"/>
    </location>
</feature>
<feature type="region of interest" description="Disordered" evidence="2">
    <location>
        <begin position="345"/>
        <end position="387"/>
    </location>
</feature>
<feature type="binding site" evidence="1">
    <location>
        <position position="34"/>
    </location>
    <ligand>
        <name>Mg(2+)</name>
        <dbReference type="ChEBI" id="CHEBI:18420"/>
        <label>1</label>
    </ligand>
</feature>
<feature type="binding site" evidence="1">
    <location>
        <position position="47"/>
    </location>
    <ligand>
        <name>DNA</name>
        <dbReference type="ChEBI" id="CHEBI:16991"/>
    </ligand>
</feature>
<feature type="binding site" evidence="1">
    <location>
        <position position="70"/>
    </location>
    <ligand>
        <name>DNA</name>
        <dbReference type="ChEBI" id="CHEBI:16991"/>
    </ligand>
</feature>
<feature type="binding site" evidence="1">
    <location>
        <position position="86"/>
    </location>
    <ligand>
        <name>Mg(2+)</name>
        <dbReference type="ChEBI" id="CHEBI:18420"/>
        <label>1</label>
    </ligand>
</feature>
<feature type="binding site" evidence="1">
    <location>
        <position position="158"/>
    </location>
    <ligand>
        <name>DNA</name>
        <dbReference type="ChEBI" id="CHEBI:16991"/>
    </ligand>
</feature>
<feature type="binding site" evidence="1">
    <location>
        <position position="158"/>
    </location>
    <ligand>
        <name>Mg(2+)</name>
        <dbReference type="ChEBI" id="CHEBI:18420"/>
        <label>1</label>
    </ligand>
</feature>
<feature type="binding site" evidence="1">
    <location>
        <position position="160"/>
    </location>
    <ligand>
        <name>Mg(2+)</name>
        <dbReference type="ChEBI" id="CHEBI:18420"/>
        <label>1</label>
    </ligand>
</feature>
<feature type="binding site" evidence="1">
    <location>
        <position position="179"/>
    </location>
    <ligand>
        <name>Mg(2+)</name>
        <dbReference type="ChEBI" id="CHEBI:18420"/>
        <label>2</label>
    </ligand>
</feature>
<feature type="binding site" evidence="1">
    <location>
        <position position="181"/>
    </location>
    <ligand>
        <name>Mg(2+)</name>
        <dbReference type="ChEBI" id="CHEBI:18420"/>
        <label>2</label>
    </ligand>
</feature>
<feature type="binding site" evidence="1">
    <location>
        <position position="231"/>
    </location>
    <ligand>
        <name>DNA</name>
        <dbReference type="ChEBI" id="CHEBI:16991"/>
    </ligand>
</feature>
<feature type="binding site" evidence="1">
    <location>
        <position position="233"/>
    </location>
    <ligand>
        <name>DNA</name>
        <dbReference type="ChEBI" id="CHEBI:16991"/>
    </ligand>
</feature>
<feature type="binding site" evidence="1">
    <location>
        <position position="233"/>
    </location>
    <ligand>
        <name>Mg(2+)</name>
        <dbReference type="ChEBI" id="CHEBI:18420"/>
        <label>2</label>
    </ligand>
</feature>